<feature type="chain" id="PRO_0000432516" description="Probable CoA-transferase Rv1866">
    <location>
        <begin position="1"/>
        <end position="792"/>
    </location>
</feature>
<feature type="active site" description="Nucleophile" evidence="1">
    <location>
        <position position="558"/>
    </location>
</feature>
<proteinExistence type="evidence at protein level"/>
<sequence>MLDLSDGCSAGGTDMVTRLLADLGADVLKVEPPGGSPGRHVRPTLAGTSIGFAMHNANKRSAVLNPLDESDRRRFLDLAASADIVVDCGLPGQAAAYGASCAELADRYRHLVALSITDFGAAGPRSSWRATDPVLYAMSGALSRSGPTAGTPVLPPDGIASATAAVQAAWAVLVAYFNRLRCGTGDYIDFSRFDAVVMALDPPFGAHGQVAAGIRSTGRWRGRPKNQDAYPIYPCRDGYVRFCVMAPRQWRGLRRWLGEPEDFQDPKYDVIGARLAAWPQISVLVAKLCAEKTMKELVAAGQALGVPITAVLTPSRILASEHFQAVGAITDAELVPGVRTGVPTGYFVVDGKRAGFRTPAPAAGQDEPRWLADPAPVPPPSGRVGGYPFEGLRILDLGIIVAGGELSRLFGDLGAEVIKVESADHPDGLRQTRVGDAMSESFAWTHRNHLALGLDLRNSEGKAIFGRLVAESDAVFANFKPGTLTSLGFSYDVLHAFNPRIVLAGSSAFGNRGPWSTRMGYGPLVRAATGVTRVWTSDEAQPDNSRHPFYDATTIFPDHVVGRVGALLALAALIHRDRTGGGAHVHISQAEVVVNQLDTMFVAEAARATDVAEIHPDTSVHAVYPCAGDDEWCVISIRSDDEWRRATSVFGQPELANDPRFGASRSRVANRSELVAAVSAWTSTRTPVQAAGALQAAGVAAGPMNRPSDILEDPQLIERNLFRDMVHPLIARPLPAETGPAPFRHIPQAPQRPAPLPGQDSVQICRKLLGMTADETERLINERVMFGPAVTA</sequence>
<name>Y1866_MYCTU</name>
<comment type="function">
    <text evidence="3">Probable CoA-transferase.</text>
</comment>
<comment type="similarity">
    <text evidence="3">Belongs to the CoA-transferase III family.</text>
</comment>
<comment type="sequence caution" evidence="2">
    <conflict type="erroneous initiation">
        <sequence resource="EMBL-CDS" id="AFN49795"/>
    </conflict>
    <text>Truncated N-terminus.</text>
</comment>
<comment type="sequence caution" evidence="2">
    <conflict type="erroneous initiation">
        <sequence resource="EMBL-CDS" id="CCP44632"/>
    </conflict>
    <text>Truncated N-terminus.</text>
</comment>
<comment type="sequence caution" evidence="2">
    <conflict type="erroneous initiation">
        <sequence resource="EMBL-CDS" id="KBJ34099"/>
    </conflict>
    <text>Truncated N-terminus.</text>
</comment>
<dbReference type="EC" id="2.8.3.-" evidence="3"/>
<dbReference type="EMBL" id="AL123456">
    <property type="protein sequence ID" value="CCP44632.1"/>
    <property type="status" value="ALT_INIT"/>
    <property type="molecule type" value="Genomic_DNA"/>
</dbReference>
<dbReference type="EMBL" id="CP003248">
    <property type="protein sequence ID" value="AFN49795.1"/>
    <property type="status" value="ALT_INIT"/>
    <property type="molecule type" value="Genomic_DNA"/>
</dbReference>
<dbReference type="EMBL" id="JLDD01000021">
    <property type="protein sequence ID" value="KBJ34099.1"/>
    <property type="status" value="ALT_INIT"/>
    <property type="molecule type" value="Genomic_DNA"/>
</dbReference>
<dbReference type="RefSeq" id="NP_216382.3">
    <property type="nucleotide sequence ID" value="NC_000962.3"/>
</dbReference>
<dbReference type="RefSeq" id="WP_003409358.1">
    <property type="nucleotide sequence ID" value="NC_000962.3"/>
</dbReference>
<dbReference type="SMR" id="P95149"/>
<dbReference type="STRING" id="83332.Rv1866"/>
<dbReference type="PaxDb" id="83332-Rv1866"/>
<dbReference type="GeneID" id="885733"/>
<dbReference type="KEGG" id="mtu:Rv1866"/>
<dbReference type="KEGG" id="mtv:RVBD_1866"/>
<dbReference type="PATRIC" id="fig|83332.111.peg.2074"/>
<dbReference type="TubercuList" id="Rv1866"/>
<dbReference type="eggNOG" id="COG1804">
    <property type="taxonomic scope" value="Bacteria"/>
</dbReference>
<dbReference type="InParanoid" id="P95149"/>
<dbReference type="OrthoDB" id="9797653at2"/>
<dbReference type="Proteomes" id="UP000001584">
    <property type="component" value="Chromosome"/>
</dbReference>
<dbReference type="GO" id="GO:0009274">
    <property type="term" value="C:peptidoglycan-based cell wall"/>
    <property type="evidence" value="ECO:0007005"/>
    <property type="project" value="MTBBASE"/>
</dbReference>
<dbReference type="GO" id="GO:0005886">
    <property type="term" value="C:plasma membrane"/>
    <property type="evidence" value="ECO:0007005"/>
    <property type="project" value="MTBBASE"/>
</dbReference>
<dbReference type="GO" id="GO:0016740">
    <property type="term" value="F:transferase activity"/>
    <property type="evidence" value="ECO:0007669"/>
    <property type="project" value="UniProtKB-KW"/>
</dbReference>
<dbReference type="Gene3D" id="3.40.50.10540">
    <property type="entry name" value="Crotonobetainyl-coa:carnitine coa-transferase, domain 1"/>
    <property type="match status" value="2"/>
</dbReference>
<dbReference type="Gene3D" id="3.30.1540.10">
    <property type="entry name" value="formyl-coa transferase, domain 3"/>
    <property type="match status" value="2"/>
</dbReference>
<dbReference type="InterPro" id="IPR050509">
    <property type="entry name" value="CoA-transferase_III"/>
</dbReference>
<dbReference type="InterPro" id="IPR003673">
    <property type="entry name" value="CoA-Trfase_fam_III"/>
</dbReference>
<dbReference type="InterPro" id="IPR044855">
    <property type="entry name" value="CoA-Trfase_III_dom3_sf"/>
</dbReference>
<dbReference type="InterPro" id="IPR023606">
    <property type="entry name" value="CoA-Trfase_III_dom_1_sf"/>
</dbReference>
<dbReference type="PANTHER" id="PTHR48228:SF6">
    <property type="entry name" value="L-CARNITINE COA-TRANSFERASE"/>
    <property type="match status" value="1"/>
</dbReference>
<dbReference type="PANTHER" id="PTHR48228">
    <property type="entry name" value="SUCCINYL-COA--D-CITRAMALATE COA-TRANSFERASE"/>
    <property type="match status" value="1"/>
</dbReference>
<dbReference type="Pfam" id="PF02515">
    <property type="entry name" value="CoA_transf_3"/>
    <property type="match status" value="2"/>
</dbReference>
<dbReference type="SUPFAM" id="SSF89796">
    <property type="entry name" value="CoA-transferase family III (CaiB/BaiF)"/>
    <property type="match status" value="2"/>
</dbReference>
<dbReference type="PROSITE" id="PS00092">
    <property type="entry name" value="N6_MTASE"/>
    <property type="match status" value="1"/>
</dbReference>
<evidence type="ECO:0000250" key="1">
    <source>
        <dbReference type="UniProtKB" id="P69902"/>
    </source>
</evidence>
<evidence type="ECO:0000269" key="2">
    <source>
    </source>
</evidence>
<evidence type="ECO:0000305" key="3"/>
<evidence type="ECO:0000312" key="4">
    <source>
        <dbReference type="EMBL" id="AFN49795.1"/>
    </source>
</evidence>
<evidence type="ECO:0000312" key="5">
    <source>
        <dbReference type="EMBL" id="CCP44632.1"/>
    </source>
</evidence>
<evidence type="ECO:0000312" key="6">
    <source>
        <dbReference type="EMBL" id="KBJ34099.1"/>
    </source>
</evidence>
<accession>P95149</accession>
<accession>I6YBT6</accession>
<accession>L0T7X6</accession>
<gene>
    <name evidence="5" type="ordered locus">Rv1866</name>
    <name evidence="4" type="ordered locus">RVBD_1866</name>
    <name evidence="6" type="ORF">P425_01930</name>
</gene>
<keyword id="KW-0903">Direct protein sequencing</keyword>
<keyword id="KW-1185">Reference proteome</keyword>
<keyword id="KW-0808">Transferase</keyword>
<reference key="1">
    <citation type="journal article" date="1998" name="Nature">
        <title>Deciphering the biology of Mycobacterium tuberculosis from the complete genome sequence.</title>
        <authorList>
            <person name="Cole S.T."/>
            <person name="Brosch R."/>
            <person name="Parkhill J."/>
            <person name="Garnier T."/>
            <person name="Churcher C.M."/>
            <person name="Harris D.E."/>
            <person name="Gordon S.V."/>
            <person name="Eiglmeier K."/>
            <person name="Gas S."/>
            <person name="Barry C.E. III"/>
            <person name="Tekaia F."/>
            <person name="Badcock K."/>
            <person name="Basham D."/>
            <person name="Brown D."/>
            <person name="Chillingworth T."/>
            <person name="Connor R."/>
            <person name="Davies R.M."/>
            <person name="Devlin K."/>
            <person name="Feltwell T."/>
            <person name="Gentles S."/>
            <person name="Hamlin N."/>
            <person name="Holroyd S."/>
            <person name="Hornsby T."/>
            <person name="Jagels K."/>
            <person name="Krogh A."/>
            <person name="McLean J."/>
            <person name="Moule S."/>
            <person name="Murphy L.D."/>
            <person name="Oliver S."/>
            <person name="Osborne J."/>
            <person name="Quail M.A."/>
            <person name="Rajandream M.A."/>
            <person name="Rogers J."/>
            <person name="Rutter S."/>
            <person name="Seeger K."/>
            <person name="Skelton S."/>
            <person name="Squares S."/>
            <person name="Squares R."/>
            <person name="Sulston J.E."/>
            <person name="Taylor K."/>
            <person name="Whitehead S."/>
            <person name="Barrell B.G."/>
        </authorList>
    </citation>
    <scope>NUCLEOTIDE SEQUENCE [LARGE SCALE GENOMIC DNA]</scope>
    <source>
        <strain>ATCC 25618 / H37Rv</strain>
    </source>
</reference>
<reference key="2">
    <citation type="submission" date="2013-11" db="EMBL/GenBank/DDBJ databases">
        <title>The genome sequence of Mycobacterium tuberculosis H37Rv.</title>
        <authorList>
            <consortium name="The Broad Institute Genome Sequencing Platform"/>
            <person name="Galagan J."/>
            <person name="Kreiswirth B."/>
            <person name="Dobos K."/>
            <person name="Fortune S."/>
            <person name="Fitzgerald M."/>
            <person name="Young S.K."/>
            <person name="Zeng Q."/>
            <person name="Gargeya S."/>
            <person name="Abouelleil A."/>
            <person name="Alvarado L."/>
            <person name="Berlin A.M."/>
            <person name="Chapman S.B."/>
            <person name="Gainer-Dewar J."/>
            <person name="Goldberg J."/>
            <person name="Gnerre S."/>
            <person name="Griggs A."/>
            <person name="Gujja S."/>
            <person name="Hansen M."/>
            <person name="Howarth C."/>
            <person name="Imamovic A."/>
            <person name="Larimer J."/>
            <person name="McCowan C."/>
            <person name="Murphy C."/>
            <person name="Pearson M."/>
            <person name="Poon T."/>
            <person name="Priest M."/>
            <person name="Roberts A."/>
            <person name="Saif S."/>
            <person name="Shea T."/>
            <person name="Sykes S."/>
            <person name="Wortman J."/>
            <person name="Nusbaum C."/>
            <person name="Birren B."/>
        </authorList>
    </citation>
    <scope>NUCLEOTIDE SEQUENCE [LARGE SCALE GENOMIC DNA]</scope>
    <source>
        <strain>ATCC 25618 / H37Rv</strain>
    </source>
</reference>
<reference key="3">
    <citation type="submission" date="2014-04" db="EMBL/GenBank/DDBJ databases">
        <title>The genome sequence of Mycobacterium tuberculosis H37Rv.</title>
        <authorList>
            <consortium name="The Broad Institute Genomics Platform"/>
            <consortium name="The Broad Institute Genome Sequencing Center for Infectious Disease"/>
            <person name="Earl A.M."/>
            <person name="Kreiswirth B."/>
            <person name="Gomez J."/>
            <person name="Victor T."/>
            <person name="Desjardins C."/>
            <person name="Abeel T."/>
            <person name="Young S."/>
            <person name="Zeng Q."/>
            <person name="Gargeya S."/>
            <person name="Abouelleil A."/>
            <person name="Alvarado L."/>
            <person name="Chapman S.B."/>
            <person name="Gainer-Dewar J."/>
            <person name="Goldberg J."/>
            <person name="Griggs A."/>
            <person name="Gujja S."/>
            <person name="Hansen M."/>
            <person name="Howarth C."/>
            <person name="Imamovic A."/>
            <person name="Larimer J."/>
            <person name="Murphy C."/>
            <person name="Naylor J."/>
            <person name="Pearson M."/>
            <person name="Poon T.W."/>
            <person name="Priest M."/>
            <person name="Roberts A."/>
            <person name="Saif S."/>
            <person name="Shea T."/>
            <person name="Sykes S."/>
            <person name="Wortman J."/>
            <person name="Nusbaum C."/>
            <person name="Birren B."/>
        </authorList>
    </citation>
    <scope>NUCLEOTIDE SEQUENCE [LARGE SCALE GENOMIC DNA]</scope>
    <source>
        <strain>ATCC 25618 / H37Rv</strain>
    </source>
</reference>
<reference key="4">
    <citation type="journal article" date="2022" name="Genomics">
        <title>Deep N-terminomics of Mycobacterium tuberculosis H37Rv extensively correct annotated encoding genes.</title>
        <authorList>
            <person name="Shi J."/>
            <person name="Meng S."/>
            <person name="Wan L."/>
            <person name="Zhang Z."/>
            <person name="Jiang S."/>
            <person name="Zhu H."/>
            <person name="Dai E."/>
            <person name="Chang L."/>
            <person name="Gao H."/>
            <person name="Wan K."/>
            <person name="Zhang L."/>
            <person name="Zhao X."/>
            <person name="Liu H."/>
            <person name="Lyu Z."/>
            <person name="Zhang Y."/>
            <person name="Xu P."/>
        </authorList>
    </citation>
    <scope>PROTEIN SEQUENCE OF 1-18</scope>
    <scope>SEQUENCE REVISION TO N-TERMINUS</scope>
    <source>
        <strain>H37Rv</strain>
    </source>
</reference>
<reference key="5">
    <citation type="journal article" date="2011" name="Mol. Cell. Proteomics">
        <title>Proteogenomic analysis of Mycobacterium tuberculosis by high resolution mass spectrometry.</title>
        <authorList>
            <person name="Kelkar D.S."/>
            <person name="Kumar D."/>
            <person name="Kumar P."/>
            <person name="Balakrishnan L."/>
            <person name="Muthusamy B."/>
            <person name="Yadav A.K."/>
            <person name="Shrivastava P."/>
            <person name="Marimuthu A."/>
            <person name="Anand S."/>
            <person name="Sundaram H."/>
            <person name="Kingsbury R."/>
            <person name="Harsha H.C."/>
            <person name="Nair B."/>
            <person name="Prasad T.S."/>
            <person name="Chauhan D.S."/>
            <person name="Katoch K."/>
            <person name="Katoch V.M."/>
            <person name="Kumar P."/>
            <person name="Chaerkady R."/>
            <person name="Ramachandran S."/>
            <person name="Dash D."/>
            <person name="Pandey A."/>
        </authorList>
    </citation>
    <scope>IDENTIFICATION BY MASS SPECTROMETRY [LARGE SCALE ANALYSIS]</scope>
    <source>
        <strain>ATCC 25618 / H37Rv</strain>
    </source>
</reference>
<organism>
    <name type="scientific">Mycobacterium tuberculosis (strain ATCC 25618 / H37Rv)</name>
    <dbReference type="NCBI Taxonomy" id="83332"/>
    <lineage>
        <taxon>Bacteria</taxon>
        <taxon>Bacillati</taxon>
        <taxon>Actinomycetota</taxon>
        <taxon>Actinomycetes</taxon>
        <taxon>Mycobacteriales</taxon>
        <taxon>Mycobacteriaceae</taxon>
        <taxon>Mycobacterium</taxon>
        <taxon>Mycobacterium tuberculosis complex</taxon>
    </lineage>
</organism>
<protein>
    <recommendedName>
        <fullName evidence="3">Probable CoA-transferase Rv1866</fullName>
        <ecNumber evidence="3">2.8.3.-</ecNumber>
    </recommendedName>
</protein>